<evidence type="ECO:0000250" key="1"/>
<evidence type="ECO:0000255" key="2"/>
<evidence type="ECO:0000255" key="3">
    <source>
        <dbReference type="PROSITE-ProRule" id="PRU01228"/>
    </source>
</evidence>
<evidence type="ECO:0000269" key="4">
    <source>
    </source>
</evidence>
<evidence type="ECO:0000303" key="5">
    <source>
    </source>
</evidence>
<evidence type="ECO:0000303" key="6">
    <source ref="1"/>
</evidence>
<evidence type="ECO:0000305" key="7"/>
<protein>
    <recommendedName>
        <fullName evidence="7">Threonine--tRNA ligase, mitochondrial 1</fullName>
        <ecNumber evidence="7">6.1.1.3</ecNumber>
    </recommendedName>
    <alternativeName>
        <fullName evidence="5">AtSYT1</fullName>
    </alternativeName>
    <alternativeName>
        <fullName evidence="7">Threonyl-tRNA synthetase</fullName>
        <shortName evidence="7">ThrRS</shortName>
    </alternativeName>
</protein>
<reference key="1">
    <citation type="online journal article" date="1999" name="Plant Gene Register">
        <title>Isolation of a cDNA encoding the cytosolic and the mitochondrial form of threonyl-tRNA synthetase in Arabidopsis thaliana.</title>
        <authorList>
            <person name="Ovesna J."/>
            <person name="Naneva H."/>
            <person name="Cosset A."/>
            <person name="Duchene A.-M."/>
            <person name="Marechal-Drouard L."/>
            <person name="Dietrich A."/>
            <person name="Souciet G."/>
        </authorList>
        <locator>PGR99-169</locator>
    </citation>
    <scope>NUCLEOTIDE SEQUENCE [MRNA]</scope>
    <source>
        <strain>cv. Columbia</strain>
    </source>
</reference>
<reference key="2">
    <citation type="journal article" date="2000" name="Nature">
        <title>Sequence and analysis of chromosome 5 of the plant Arabidopsis thaliana.</title>
        <authorList>
            <person name="Tabata S."/>
            <person name="Kaneko T."/>
            <person name="Nakamura Y."/>
            <person name="Kotani H."/>
            <person name="Kato T."/>
            <person name="Asamizu E."/>
            <person name="Miyajima N."/>
            <person name="Sasamoto S."/>
            <person name="Kimura T."/>
            <person name="Hosouchi T."/>
            <person name="Kawashima K."/>
            <person name="Kohara M."/>
            <person name="Matsumoto M."/>
            <person name="Matsuno A."/>
            <person name="Muraki A."/>
            <person name="Nakayama S."/>
            <person name="Nakazaki N."/>
            <person name="Naruo K."/>
            <person name="Okumura S."/>
            <person name="Shinpo S."/>
            <person name="Takeuchi C."/>
            <person name="Wada T."/>
            <person name="Watanabe A."/>
            <person name="Yamada M."/>
            <person name="Yasuda M."/>
            <person name="Sato S."/>
            <person name="de la Bastide M."/>
            <person name="Huang E."/>
            <person name="Spiegel L."/>
            <person name="Gnoj L."/>
            <person name="O'Shaughnessy A."/>
            <person name="Preston R."/>
            <person name="Habermann K."/>
            <person name="Murray J."/>
            <person name="Johnson D."/>
            <person name="Rohlfing T."/>
            <person name="Nelson J."/>
            <person name="Stoneking T."/>
            <person name="Pepin K."/>
            <person name="Spieth J."/>
            <person name="Sekhon M."/>
            <person name="Armstrong J."/>
            <person name="Becker M."/>
            <person name="Belter E."/>
            <person name="Cordum H."/>
            <person name="Cordes M."/>
            <person name="Courtney L."/>
            <person name="Courtney W."/>
            <person name="Dante M."/>
            <person name="Du H."/>
            <person name="Edwards J."/>
            <person name="Fryman J."/>
            <person name="Haakensen B."/>
            <person name="Lamar E."/>
            <person name="Latreille P."/>
            <person name="Leonard S."/>
            <person name="Meyer R."/>
            <person name="Mulvaney E."/>
            <person name="Ozersky P."/>
            <person name="Riley A."/>
            <person name="Strowmatt C."/>
            <person name="Wagner-McPherson C."/>
            <person name="Wollam A."/>
            <person name="Yoakum M."/>
            <person name="Bell M."/>
            <person name="Dedhia N."/>
            <person name="Parnell L."/>
            <person name="Shah R."/>
            <person name="Rodriguez M."/>
            <person name="Hoon See L."/>
            <person name="Vil D."/>
            <person name="Baker J."/>
            <person name="Kirchoff K."/>
            <person name="Toth K."/>
            <person name="King L."/>
            <person name="Bahret A."/>
            <person name="Miller B."/>
            <person name="Marra M.A."/>
            <person name="Martienssen R."/>
            <person name="McCombie W.R."/>
            <person name="Wilson R.K."/>
            <person name="Murphy G."/>
            <person name="Bancroft I."/>
            <person name="Volckaert G."/>
            <person name="Wambutt R."/>
            <person name="Duesterhoeft A."/>
            <person name="Stiekema W."/>
            <person name="Pohl T."/>
            <person name="Entian K.-D."/>
            <person name="Terryn N."/>
            <person name="Hartley N."/>
            <person name="Bent E."/>
            <person name="Johnson S."/>
            <person name="Langham S.-A."/>
            <person name="McCullagh B."/>
            <person name="Robben J."/>
            <person name="Grymonprez B."/>
            <person name="Zimmermann W."/>
            <person name="Ramsperger U."/>
            <person name="Wedler H."/>
            <person name="Balke K."/>
            <person name="Wedler E."/>
            <person name="Peters S."/>
            <person name="van Staveren M."/>
            <person name="Dirkse W."/>
            <person name="Mooijman P."/>
            <person name="Klein Lankhorst R."/>
            <person name="Weitzenegger T."/>
            <person name="Bothe G."/>
            <person name="Rose M."/>
            <person name="Hauf J."/>
            <person name="Berneiser S."/>
            <person name="Hempel S."/>
            <person name="Feldpausch M."/>
            <person name="Lamberth S."/>
            <person name="Villarroel R."/>
            <person name="Gielen J."/>
            <person name="Ardiles W."/>
            <person name="Bents O."/>
            <person name="Lemcke K."/>
            <person name="Kolesov G."/>
            <person name="Mayer K.F.X."/>
            <person name="Rudd S."/>
            <person name="Schoof H."/>
            <person name="Schueller C."/>
            <person name="Zaccaria P."/>
            <person name="Mewes H.-W."/>
            <person name="Bevan M."/>
            <person name="Fransz P.F."/>
        </authorList>
    </citation>
    <scope>NUCLEOTIDE SEQUENCE [LARGE SCALE GENOMIC DNA]</scope>
    <source>
        <strain>cv. Columbia</strain>
    </source>
</reference>
<reference key="3">
    <citation type="journal article" date="2017" name="Plant J.">
        <title>Araport11: a complete reannotation of the Arabidopsis thaliana reference genome.</title>
        <authorList>
            <person name="Cheng C.Y."/>
            <person name="Krishnakumar V."/>
            <person name="Chan A.P."/>
            <person name="Thibaud-Nissen F."/>
            <person name="Schobel S."/>
            <person name="Town C.D."/>
        </authorList>
    </citation>
    <scope>GENOME REANNOTATION</scope>
    <source>
        <strain>cv. Columbia</strain>
    </source>
</reference>
<reference key="4">
    <citation type="journal article" date="2003" name="Science">
        <title>Empirical analysis of transcriptional activity in the Arabidopsis genome.</title>
        <authorList>
            <person name="Yamada K."/>
            <person name="Lim J."/>
            <person name="Dale J.M."/>
            <person name="Chen H."/>
            <person name="Shinn P."/>
            <person name="Palm C.J."/>
            <person name="Southwick A.M."/>
            <person name="Wu H.C."/>
            <person name="Kim C.J."/>
            <person name="Nguyen M."/>
            <person name="Pham P.K."/>
            <person name="Cheuk R.F."/>
            <person name="Karlin-Newmann G."/>
            <person name="Liu S.X."/>
            <person name="Lam B."/>
            <person name="Sakano H."/>
            <person name="Wu T."/>
            <person name="Yu G."/>
            <person name="Miranda M."/>
            <person name="Quach H.L."/>
            <person name="Tripp M."/>
            <person name="Chang C.H."/>
            <person name="Lee J.M."/>
            <person name="Toriumi M.J."/>
            <person name="Chan M.M."/>
            <person name="Tang C.C."/>
            <person name="Onodera C.S."/>
            <person name="Deng J.M."/>
            <person name="Akiyama K."/>
            <person name="Ansari Y."/>
            <person name="Arakawa T."/>
            <person name="Banh J."/>
            <person name="Banno F."/>
            <person name="Bowser L."/>
            <person name="Brooks S.Y."/>
            <person name="Carninci P."/>
            <person name="Chao Q."/>
            <person name="Choy N."/>
            <person name="Enju A."/>
            <person name="Goldsmith A.D."/>
            <person name="Gurjal M."/>
            <person name="Hansen N.F."/>
            <person name="Hayashizaki Y."/>
            <person name="Johnson-Hopson C."/>
            <person name="Hsuan V.W."/>
            <person name="Iida K."/>
            <person name="Karnes M."/>
            <person name="Khan S."/>
            <person name="Koesema E."/>
            <person name="Ishida J."/>
            <person name="Jiang P.X."/>
            <person name="Jones T."/>
            <person name="Kawai J."/>
            <person name="Kamiya A."/>
            <person name="Meyers C."/>
            <person name="Nakajima M."/>
            <person name="Narusaka M."/>
            <person name="Seki M."/>
            <person name="Sakurai T."/>
            <person name="Satou M."/>
            <person name="Tamse R."/>
            <person name="Vaysberg M."/>
            <person name="Wallender E.K."/>
            <person name="Wong C."/>
            <person name="Yamamura Y."/>
            <person name="Yuan S."/>
            <person name="Shinozaki K."/>
            <person name="Davis R.W."/>
            <person name="Theologis A."/>
            <person name="Ecker J.R."/>
        </authorList>
    </citation>
    <scope>NUCLEOTIDE SEQUENCE [LARGE SCALE MRNA]</scope>
    <source>
        <strain>cv. Columbia</strain>
    </source>
</reference>
<reference key="5">
    <citation type="journal article" date="1999" name="Eur. J. Biochem.">
        <title>Characterization of two bifunctional Arabdopsis thaliana genes coding for mitochondrial and cytosolic forms of valyl-tRNA synthetase and threonyl-tRNA synthetase by alternative use of two in-frame AUGs.</title>
        <authorList>
            <person name="Souciet G."/>
            <person name="Menand B."/>
            <person name="Ovesna J."/>
            <person name="Cosset A."/>
            <person name="Dietrich A."/>
            <person name="Wintz H."/>
        </authorList>
    </citation>
    <scope>SUBCELLULAR LOCATION</scope>
</reference>
<reference key="6">
    <citation type="journal article" date="2007" name="Mol. Cell. Proteomics">
        <title>Multidimensional protein identification technology (MudPIT) analysis of ubiquitinated proteins in plants.</title>
        <authorList>
            <person name="Maor R."/>
            <person name="Jones A."/>
            <person name="Nuehse T.S."/>
            <person name="Studholme D.J."/>
            <person name="Peck S.C."/>
            <person name="Shirasu K."/>
        </authorList>
    </citation>
    <scope>IDENTIFICATION BY MASS SPECTROMETRY [LARGE SCALE ANALYSIS]</scope>
    <source>
        <strain>cv. Landsberg erecta</strain>
    </source>
</reference>
<feature type="transit peptide" description="Mitochondrion" evidence="2">
    <location>
        <begin position="1"/>
        <end position="21"/>
    </location>
</feature>
<feature type="chain" id="PRO_0000035824" description="Threonine--tRNA ligase, mitochondrial 1">
    <location>
        <begin position="22"/>
        <end position="709"/>
    </location>
</feature>
<feature type="domain" description="TGS" evidence="3">
    <location>
        <begin position="73"/>
        <end position="135"/>
    </location>
</feature>
<feature type="binding site" evidence="1">
    <location>
        <position position="407"/>
    </location>
    <ligand>
        <name>Zn(2+)</name>
        <dbReference type="ChEBI" id="CHEBI:29105"/>
        <note>catalytic</note>
    </ligand>
</feature>
<feature type="binding site" evidence="1">
    <location>
        <position position="458"/>
    </location>
    <ligand>
        <name>Zn(2+)</name>
        <dbReference type="ChEBI" id="CHEBI:29105"/>
        <note>catalytic</note>
    </ligand>
</feature>
<feature type="binding site" evidence="1">
    <location>
        <position position="584"/>
    </location>
    <ligand>
        <name>Zn(2+)</name>
        <dbReference type="ChEBI" id="CHEBI:29105"/>
        <note>catalytic</note>
    </ligand>
</feature>
<feature type="splice variant" id="VSP_018908" description="In isoform Cytoplasmic." evidence="7">
    <location>
        <begin position="1"/>
        <end position="33"/>
    </location>
</feature>
<feature type="sequence conflict" description="In Ref. 4; AAK82468/AAO64760." evidence="7" ref="4">
    <original>M</original>
    <variation>V</variation>
    <location>
        <position position="121"/>
    </location>
</feature>
<feature type="sequence conflict" description="In Ref. 1; CAA74705." evidence="7" ref="1">
    <original>M</original>
    <variation>L</variation>
    <location>
        <position position="426"/>
    </location>
</feature>
<comment type="catalytic activity">
    <reaction evidence="7">
        <text>tRNA(Thr) + L-threonine + ATP = L-threonyl-tRNA(Thr) + AMP + diphosphate + H(+)</text>
        <dbReference type="Rhea" id="RHEA:24624"/>
        <dbReference type="Rhea" id="RHEA-COMP:9670"/>
        <dbReference type="Rhea" id="RHEA-COMP:9704"/>
        <dbReference type="ChEBI" id="CHEBI:15378"/>
        <dbReference type="ChEBI" id="CHEBI:30616"/>
        <dbReference type="ChEBI" id="CHEBI:33019"/>
        <dbReference type="ChEBI" id="CHEBI:57926"/>
        <dbReference type="ChEBI" id="CHEBI:78442"/>
        <dbReference type="ChEBI" id="CHEBI:78534"/>
        <dbReference type="ChEBI" id="CHEBI:456215"/>
        <dbReference type="EC" id="6.1.1.3"/>
    </reaction>
</comment>
<comment type="subcellular location">
    <subcellularLocation>
        <location evidence="4">Mitochondrion</location>
    </subcellularLocation>
    <subcellularLocation>
        <location evidence="4">Cytoplasm</location>
        <location evidence="4">Cytosol</location>
    </subcellularLocation>
</comment>
<comment type="alternative products">
    <event type="alternative initiation"/>
    <isoform>
        <id>O04630-1</id>
        <name>Mitochondrial</name>
        <sequence type="displayed"/>
    </isoform>
    <isoform>
        <id>O04630-2</id>
        <name>Cytoplasmic</name>
        <sequence type="described" ref="VSP_018908"/>
    </isoform>
</comment>
<comment type="similarity">
    <text evidence="7">Belongs to the class-II aminoacyl-tRNA synthetase family.</text>
</comment>
<comment type="sequence caution" evidence="7">
    <conflict type="erroneous gene model prediction">
        <sequence resource="EMBL-CDS" id="AAB61048"/>
    </conflict>
</comment>
<accession>O04630</accession>
<accession>O81907</accession>
<accession>Q84TG4</accession>
<accession>Q94AG0</accession>
<name>SYTM1_ARATH</name>
<gene>
    <name evidence="6" type="primary">THRRS</name>
    <name type="ordered locus">At5g26830</name>
    <name type="ORF">F2P16.7</name>
</gene>
<keyword id="KW-0024">Alternative initiation</keyword>
<keyword id="KW-0030">Aminoacyl-tRNA synthetase</keyword>
<keyword id="KW-0067">ATP-binding</keyword>
<keyword id="KW-0963">Cytoplasm</keyword>
<keyword id="KW-0436">Ligase</keyword>
<keyword id="KW-0479">Metal-binding</keyword>
<keyword id="KW-0496">Mitochondrion</keyword>
<keyword id="KW-0547">Nucleotide-binding</keyword>
<keyword id="KW-0648">Protein biosynthesis</keyword>
<keyword id="KW-1185">Reference proteome</keyword>
<keyword id="KW-0809">Transit peptide</keyword>
<keyword id="KW-0862">Zinc</keyword>
<organism>
    <name type="scientific">Arabidopsis thaliana</name>
    <name type="common">Mouse-ear cress</name>
    <dbReference type="NCBI Taxonomy" id="3702"/>
    <lineage>
        <taxon>Eukaryota</taxon>
        <taxon>Viridiplantae</taxon>
        <taxon>Streptophyta</taxon>
        <taxon>Embryophyta</taxon>
        <taxon>Tracheophyta</taxon>
        <taxon>Spermatophyta</taxon>
        <taxon>Magnoliopsida</taxon>
        <taxon>eudicotyledons</taxon>
        <taxon>Gunneridae</taxon>
        <taxon>Pentapetalae</taxon>
        <taxon>rosids</taxon>
        <taxon>malvids</taxon>
        <taxon>Brassicales</taxon>
        <taxon>Brassicaceae</taxon>
        <taxon>Camelineae</taxon>
        <taxon>Arabidopsis</taxon>
    </lineage>
</organism>
<proteinExistence type="evidence at protein level"/>
<dbReference type="EC" id="6.1.1.3" evidence="7"/>
<dbReference type="EMBL" id="Y14329">
    <property type="protein sequence ID" value="CAA74705.1"/>
    <property type="molecule type" value="mRNA"/>
</dbReference>
<dbReference type="EMBL" id="AF007270">
    <property type="protein sequence ID" value="AAB61048.1"/>
    <property type="status" value="ALT_SEQ"/>
    <property type="molecule type" value="Genomic_DNA"/>
</dbReference>
<dbReference type="EMBL" id="CP002688">
    <property type="protein sequence ID" value="AED93610.1"/>
    <property type="molecule type" value="Genomic_DNA"/>
</dbReference>
<dbReference type="EMBL" id="AY048205">
    <property type="protein sequence ID" value="AAK82468.1"/>
    <property type="molecule type" value="mRNA"/>
</dbReference>
<dbReference type="EMBL" id="BT005825">
    <property type="protein sequence ID" value="AAO64760.1"/>
    <property type="molecule type" value="mRNA"/>
</dbReference>
<dbReference type="PIR" id="T01763">
    <property type="entry name" value="T01763"/>
</dbReference>
<dbReference type="PIR" id="T51624">
    <property type="entry name" value="T51624"/>
</dbReference>
<dbReference type="RefSeq" id="NP_198035.2">
    <molecule id="O04630-1"/>
    <property type="nucleotide sequence ID" value="NM_122565.3"/>
</dbReference>
<dbReference type="SMR" id="O04630"/>
<dbReference type="BioGRID" id="18016">
    <property type="interactions" value="17"/>
</dbReference>
<dbReference type="FunCoup" id="O04630">
    <property type="interactions" value="4311"/>
</dbReference>
<dbReference type="IntAct" id="O04630">
    <property type="interactions" value="2"/>
</dbReference>
<dbReference type="STRING" id="3702.O04630"/>
<dbReference type="iPTMnet" id="O04630"/>
<dbReference type="PaxDb" id="3702-AT5G26830.1"/>
<dbReference type="ProteomicsDB" id="234108">
    <molecule id="O04630-1"/>
</dbReference>
<dbReference type="EnsemblPlants" id="AT5G26830.1">
    <molecule id="O04630-1"/>
    <property type="protein sequence ID" value="AT5G26830.1"/>
    <property type="gene ID" value="AT5G26830"/>
</dbReference>
<dbReference type="GeneID" id="832741"/>
<dbReference type="Gramene" id="AT5G26830.1">
    <molecule id="O04630-1"/>
    <property type="protein sequence ID" value="AT5G26830.1"/>
    <property type="gene ID" value="AT5G26830"/>
</dbReference>
<dbReference type="KEGG" id="ath:AT5G26830"/>
<dbReference type="Araport" id="AT5G26830"/>
<dbReference type="TAIR" id="AT5G26830"/>
<dbReference type="eggNOG" id="KOG1637">
    <property type="taxonomic scope" value="Eukaryota"/>
</dbReference>
<dbReference type="HOGENOM" id="CLU_008554_0_2_1"/>
<dbReference type="InParanoid" id="O04630"/>
<dbReference type="OMA" id="MMNQRLW"/>
<dbReference type="PhylomeDB" id="O04630"/>
<dbReference type="PRO" id="PR:O04630"/>
<dbReference type="Proteomes" id="UP000006548">
    <property type="component" value="Chromosome 5"/>
</dbReference>
<dbReference type="ExpressionAtlas" id="O04630">
    <property type="expression patterns" value="baseline and differential"/>
</dbReference>
<dbReference type="GO" id="GO:0009507">
    <property type="term" value="C:chloroplast"/>
    <property type="evidence" value="ECO:0000314"/>
    <property type="project" value="TAIR"/>
</dbReference>
<dbReference type="GO" id="GO:0005829">
    <property type="term" value="C:cytosol"/>
    <property type="evidence" value="ECO:0007005"/>
    <property type="project" value="TAIR"/>
</dbReference>
<dbReference type="GO" id="GO:0005739">
    <property type="term" value="C:mitochondrion"/>
    <property type="evidence" value="ECO:0000314"/>
    <property type="project" value="TAIR"/>
</dbReference>
<dbReference type="GO" id="GO:0009505">
    <property type="term" value="C:plant-type cell wall"/>
    <property type="evidence" value="ECO:0007005"/>
    <property type="project" value="TAIR"/>
</dbReference>
<dbReference type="GO" id="GO:0009536">
    <property type="term" value="C:plastid"/>
    <property type="evidence" value="ECO:0007005"/>
    <property type="project" value="TAIR"/>
</dbReference>
<dbReference type="GO" id="GO:0005524">
    <property type="term" value="F:ATP binding"/>
    <property type="evidence" value="ECO:0007669"/>
    <property type="project" value="UniProtKB-KW"/>
</dbReference>
<dbReference type="GO" id="GO:0046872">
    <property type="term" value="F:metal ion binding"/>
    <property type="evidence" value="ECO:0007669"/>
    <property type="project" value="UniProtKB-KW"/>
</dbReference>
<dbReference type="GO" id="GO:0004829">
    <property type="term" value="F:threonine-tRNA ligase activity"/>
    <property type="evidence" value="ECO:0007669"/>
    <property type="project" value="UniProtKB-EC"/>
</dbReference>
<dbReference type="GO" id="GO:0006435">
    <property type="term" value="P:threonyl-tRNA aminoacylation"/>
    <property type="evidence" value="ECO:0007669"/>
    <property type="project" value="InterPro"/>
</dbReference>
<dbReference type="CDD" id="cd01667">
    <property type="entry name" value="TGS_ThrRS"/>
    <property type="match status" value="1"/>
</dbReference>
<dbReference type="CDD" id="cd00860">
    <property type="entry name" value="ThrRS_anticodon"/>
    <property type="match status" value="1"/>
</dbReference>
<dbReference type="CDD" id="cd00771">
    <property type="entry name" value="ThrRS_core"/>
    <property type="match status" value="1"/>
</dbReference>
<dbReference type="FunFam" id="3.30.930.10:FF:000009">
    <property type="entry name" value="Threonine--tRNA ligase 2, cytoplasmic"/>
    <property type="match status" value="1"/>
</dbReference>
<dbReference type="FunFam" id="3.40.50.800:FF:000019">
    <property type="entry name" value="Threonine--tRNA ligase mitochondrial 1"/>
    <property type="match status" value="1"/>
</dbReference>
<dbReference type="FunFam" id="3.10.20.30:FF:000006">
    <property type="entry name" value="Threonine--tRNA ligase, cytoplasmic"/>
    <property type="match status" value="1"/>
</dbReference>
<dbReference type="FunFam" id="3.30.980.10:FF:000005">
    <property type="entry name" value="Threonyl-tRNA synthetase, mitochondrial"/>
    <property type="match status" value="1"/>
</dbReference>
<dbReference type="Gene3D" id="3.10.20.30">
    <property type="match status" value="1"/>
</dbReference>
<dbReference type="Gene3D" id="3.40.50.800">
    <property type="entry name" value="Anticodon-binding domain"/>
    <property type="match status" value="1"/>
</dbReference>
<dbReference type="Gene3D" id="3.30.930.10">
    <property type="entry name" value="Bira Bifunctional Protein, Domain 2"/>
    <property type="match status" value="1"/>
</dbReference>
<dbReference type="Gene3D" id="3.30.980.10">
    <property type="entry name" value="Threonyl-trna Synthetase, Chain A, domain 2"/>
    <property type="match status" value="1"/>
</dbReference>
<dbReference type="HAMAP" id="MF_00184">
    <property type="entry name" value="Thr_tRNA_synth"/>
    <property type="match status" value="1"/>
</dbReference>
<dbReference type="InterPro" id="IPR002314">
    <property type="entry name" value="aa-tRNA-synt_IIb"/>
</dbReference>
<dbReference type="InterPro" id="IPR006195">
    <property type="entry name" value="aa-tRNA-synth_II"/>
</dbReference>
<dbReference type="InterPro" id="IPR045864">
    <property type="entry name" value="aa-tRNA-synth_II/BPL/LPL"/>
</dbReference>
<dbReference type="InterPro" id="IPR004154">
    <property type="entry name" value="Anticodon-bd"/>
</dbReference>
<dbReference type="InterPro" id="IPR036621">
    <property type="entry name" value="Anticodon-bd_dom_sf"/>
</dbReference>
<dbReference type="InterPro" id="IPR012675">
    <property type="entry name" value="Beta-grasp_dom_sf"/>
</dbReference>
<dbReference type="InterPro" id="IPR004095">
    <property type="entry name" value="TGS"/>
</dbReference>
<dbReference type="InterPro" id="IPR012676">
    <property type="entry name" value="TGS-like"/>
</dbReference>
<dbReference type="InterPro" id="IPR002320">
    <property type="entry name" value="Thr-tRNA-ligase_IIa"/>
</dbReference>
<dbReference type="InterPro" id="IPR018163">
    <property type="entry name" value="Thr/Ala-tRNA-synth_IIc_edit"/>
</dbReference>
<dbReference type="InterPro" id="IPR047246">
    <property type="entry name" value="ThrRS_anticodon"/>
</dbReference>
<dbReference type="InterPro" id="IPR033728">
    <property type="entry name" value="ThrRS_core"/>
</dbReference>
<dbReference type="InterPro" id="IPR012947">
    <property type="entry name" value="tRNA_SAD"/>
</dbReference>
<dbReference type="NCBIfam" id="TIGR00418">
    <property type="entry name" value="thrS"/>
    <property type="match status" value="1"/>
</dbReference>
<dbReference type="PANTHER" id="PTHR11451:SF46">
    <property type="entry name" value="THREONINE--TRNA LIGASE"/>
    <property type="match status" value="1"/>
</dbReference>
<dbReference type="PANTHER" id="PTHR11451">
    <property type="entry name" value="THREONINE-TRNA LIGASE"/>
    <property type="match status" value="1"/>
</dbReference>
<dbReference type="Pfam" id="PF03129">
    <property type="entry name" value="HGTP_anticodon"/>
    <property type="match status" value="1"/>
</dbReference>
<dbReference type="Pfam" id="PF02824">
    <property type="entry name" value="TGS"/>
    <property type="match status" value="1"/>
</dbReference>
<dbReference type="Pfam" id="PF00587">
    <property type="entry name" value="tRNA-synt_2b"/>
    <property type="match status" value="1"/>
</dbReference>
<dbReference type="Pfam" id="PF07973">
    <property type="entry name" value="tRNA_SAD"/>
    <property type="match status" value="1"/>
</dbReference>
<dbReference type="PRINTS" id="PR01047">
    <property type="entry name" value="TRNASYNTHTHR"/>
</dbReference>
<dbReference type="SMART" id="SM00863">
    <property type="entry name" value="tRNA_SAD"/>
    <property type="match status" value="1"/>
</dbReference>
<dbReference type="SUPFAM" id="SSF52954">
    <property type="entry name" value="Class II aaRS ABD-related"/>
    <property type="match status" value="1"/>
</dbReference>
<dbReference type="SUPFAM" id="SSF55681">
    <property type="entry name" value="Class II aaRS and biotin synthetases"/>
    <property type="match status" value="1"/>
</dbReference>
<dbReference type="SUPFAM" id="SSF81271">
    <property type="entry name" value="TGS-like"/>
    <property type="match status" value="1"/>
</dbReference>
<dbReference type="SUPFAM" id="SSF55186">
    <property type="entry name" value="ThrRS/AlaRS common domain"/>
    <property type="match status" value="1"/>
</dbReference>
<dbReference type="PROSITE" id="PS50862">
    <property type="entry name" value="AA_TRNA_LIGASE_II"/>
    <property type="match status" value="1"/>
</dbReference>
<dbReference type="PROSITE" id="PS51880">
    <property type="entry name" value="TGS"/>
    <property type="match status" value="1"/>
</dbReference>
<sequence length="709" mass="80936">MLLRLTARSIRRFTTSSSSLPLLSSSSFCTVPTMAANHPKDEAYLSAVIPKRIKLFEQIQANQLENLKSLPHDPIKVTLPDGNVKEGKKWETTPMDIAAQISKGLANSALISAVDDVLWDMNRPLEGDCKLELFKFDSDKGRDTLWHSSAHILGQALEQEYGCQLCIGPCTTRGEGFYYDGFYGELGLSDNHFPSIEAGAAKAAKEAQPFERIEVTKDQALEMFSENNFKVELINGLPADMTITVYRCGPLVDLCRGPHIPNTSFVKAFKCLRASSAYWKGDKDRESLQRVYGISYPDQKQLKKYLQFLEEAKKYDHRLLGQKQELFFSHQLSPGSYFFLPLGTRVYNRLMDFIKNQYWHRGYTEVITPNMYNMELWQTSGHADNYKDNMFTFNIEKQEFGLKPMNCPGHCLIFQHRVRSYRELPMRLADFGVLHRNEASGALSGLTRVRRFQQDDAHIFCTTEQVKGEVQGVLEFIDYVYKVFGFTYELKLSTRPEKYLGDLETWDKAEADLKEAIEAFGKPLVLNEGDGAFYGPKIDITVSDAMNRKFQCATLQLDFQLPIRFNLEYAAEDEAKKSRPVMIHRAVLGSVERMFAILLEHYKGKWPFWISPRQAIVCPISEKSQQYAEKVQKQIKDAGFYVDADLTDRKIDKKVREAQLAQYNYILVVGETEAATGQVSVRVRDNAAHSVKSIEDLLEEFKAKTAEFV</sequence>